<gene>
    <name type="ordered locus">MJ0127</name>
</gene>
<protein>
    <recommendedName>
        <fullName>Putative RNase MJ0127</fullName>
        <ecNumber evidence="2">3.1.-.-</ecNumber>
    </recommendedName>
    <alternativeName>
        <fullName>Putative toxin MJ0127</fullName>
    </alternativeName>
</protein>
<organism>
    <name type="scientific">Methanocaldococcus jannaschii (strain ATCC 43067 / DSM 2661 / JAL-1 / JCM 10045 / NBRC 100440)</name>
    <name type="common">Methanococcus jannaschii</name>
    <dbReference type="NCBI Taxonomy" id="243232"/>
    <lineage>
        <taxon>Archaea</taxon>
        <taxon>Methanobacteriati</taxon>
        <taxon>Methanobacteriota</taxon>
        <taxon>Methanomada group</taxon>
        <taxon>Methanococci</taxon>
        <taxon>Methanococcales</taxon>
        <taxon>Methanocaldococcaceae</taxon>
        <taxon>Methanocaldococcus</taxon>
    </lineage>
</organism>
<keyword id="KW-0378">Hydrolase</keyword>
<keyword id="KW-0540">Nuclease</keyword>
<keyword id="KW-0547">Nucleotide-binding</keyword>
<keyword id="KW-0597">Phosphoprotein</keyword>
<keyword id="KW-1185">Reference proteome</keyword>
<keyword id="KW-1277">Toxin-antitoxin system</keyword>
<comment type="function">
    <text evidence="2">Probable toxic component of a putative type VII toxin-antitoxin (TA) system, probably an RNase. Probably neutralized by cognate antitoxin MJ0128. Neutralization may be due to AMPylation by MJ0128.</text>
</comment>
<comment type="subunit">
    <text evidence="2">Homodimer, probably forms a complex with cognate antitoxin MJ0128.</text>
</comment>
<comment type="PTM">
    <text evidence="1">Modified by cognate antitoxin MJ0128; probably at least 2 successive AMPylation events occur on Tyr-83.</text>
</comment>
<comment type="similarity">
    <text evidence="3">Belongs to the HepT RNase toxin family.</text>
</comment>
<accession>Q57591</accession>
<reference key="1">
    <citation type="journal article" date="1996" name="Science">
        <title>Complete genome sequence of the methanogenic archaeon, Methanococcus jannaschii.</title>
        <authorList>
            <person name="Bult C.J."/>
            <person name="White O."/>
            <person name="Olsen G.J."/>
            <person name="Zhou L."/>
            <person name="Fleischmann R.D."/>
            <person name="Sutton G.G."/>
            <person name="Blake J.A."/>
            <person name="FitzGerald L.M."/>
            <person name="Clayton R.A."/>
            <person name="Gocayne J.D."/>
            <person name="Kerlavage A.R."/>
            <person name="Dougherty B.A."/>
            <person name="Tomb J.-F."/>
            <person name="Adams M.D."/>
            <person name="Reich C.I."/>
            <person name="Overbeek R."/>
            <person name="Kirkness E.F."/>
            <person name="Weinstock K.G."/>
            <person name="Merrick J.M."/>
            <person name="Glodek A."/>
            <person name="Scott J.L."/>
            <person name="Geoghagen N.S.M."/>
            <person name="Weidman J.F."/>
            <person name="Fuhrmann J.L."/>
            <person name="Nguyen D."/>
            <person name="Utterback T.R."/>
            <person name="Kelley J.M."/>
            <person name="Peterson J.D."/>
            <person name="Sadow P.W."/>
            <person name="Hanna M.C."/>
            <person name="Cotton M.D."/>
            <person name="Roberts K.M."/>
            <person name="Hurst M.A."/>
            <person name="Kaine B.P."/>
            <person name="Borodovsky M."/>
            <person name="Klenk H.-P."/>
            <person name="Fraser C.M."/>
            <person name="Smith H.O."/>
            <person name="Woese C.R."/>
            <person name="Venter J.C."/>
        </authorList>
    </citation>
    <scope>NUCLEOTIDE SEQUENCE [LARGE SCALE GENOMIC DNA]</scope>
    <source>
        <strain>ATCC 43067 / DSM 2661 / JAL-1 / JCM 10045 / NBRC 100440</strain>
    </source>
</reference>
<evidence type="ECO:0000250" key="1">
    <source>
        <dbReference type="UniProtKB" id="A0A0B0QJR1"/>
    </source>
</evidence>
<evidence type="ECO:0000250" key="2">
    <source>
        <dbReference type="UniProtKB" id="Q8ECH6"/>
    </source>
</evidence>
<evidence type="ECO:0000305" key="3"/>
<feature type="chain" id="PRO_0000158260" description="Putative RNase MJ0127">
    <location>
        <begin position="1"/>
        <end position="121"/>
    </location>
</feature>
<feature type="short sequence motif" description="RX(4)HXY motif" evidence="1">
    <location>
        <begin position="76"/>
        <end position="83"/>
    </location>
</feature>
<feature type="active site" evidence="1">
    <location>
        <position position="76"/>
    </location>
</feature>
<feature type="active site" evidence="1">
    <location>
        <position position="81"/>
    </location>
</feature>
<feature type="modified residue" description="O-di-AMP-tyrosine" evidence="1">
    <location>
        <position position="83"/>
    </location>
</feature>
<sequence length="121" mass="14358">MPKKDVRAFLYDILENMKDIIDFTNDMTFDEFLKDKKTQKAVIRSLEVIGEAVKNLPEDFINKYPQVPWKGMARLRDKLIHHYFGINYEIIWDIVINKVPNDIKEIEEIIKDIEGEDENSI</sequence>
<name>Y127_METJA</name>
<proteinExistence type="inferred from homology"/>
<dbReference type="EC" id="3.1.-.-" evidence="2"/>
<dbReference type="EMBL" id="L77117">
    <property type="protein sequence ID" value="AAB98107.1"/>
    <property type="molecule type" value="Genomic_DNA"/>
</dbReference>
<dbReference type="PIR" id="G64315">
    <property type="entry name" value="G64315"/>
</dbReference>
<dbReference type="RefSeq" id="WP_010869620.1">
    <property type="nucleotide sequence ID" value="NC_000909.1"/>
</dbReference>
<dbReference type="SMR" id="Q57591"/>
<dbReference type="FunCoup" id="Q57591">
    <property type="interactions" value="3"/>
</dbReference>
<dbReference type="STRING" id="243232.MJ_0127"/>
<dbReference type="PaxDb" id="243232-MJ_0127"/>
<dbReference type="EnsemblBacteria" id="AAB98107">
    <property type="protein sequence ID" value="AAB98107"/>
    <property type="gene ID" value="MJ_0127"/>
</dbReference>
<dbReference type="GeneID" id="1450969"/>
<dbReference type="KEGG" id="mja:MJ_0127"/>
<dbReference type="eggNOG" id="arCOG05024">
    <property type="taxonomic scope" value="Archaea"/>
</dbReference>
<dbReference type="HOGENOM" id="CLU_142825_3_3_2"/>
<dbReference type="InParanoid" id="Q57591"/>
<dbReference type="OrthoDB" id="318716at2157"/>
<dbReference type="PhylomeDB" id="Q57591"/>
<dbReference type="Proteomes" id="UP000000805">
    <property type="component" value="Chromosome"/>
</dbReference>
<dbReference type="GO" id="GO:0110001">
    <property type="term" value="C:toxin-antitoxin complex"/>
    <property type="evidence" value="ECO:0007669"/>
    <property type="project" value="InterPro"/>
</dbReference>
<dbReference type="GO" id="GO:0000166">
    <property type="term" value="F:nucleotide binding"/>
    <property type="evidence" value="ECO:0007669"/>
    <property type="project" value="UniProtKB-KW"/>
</dbReference>
<dbReference type="GO" id="GO:0004540">
    <property type="term" value="F:RNA nuclease activity"/>
    <property type="evidence" value="ECO:0007669"/>
    <property type="project" value="InterPro"/>
</dbReference>
<dbReference type="InterPro" id="IPR008201">
    <property type="entry name" value="HepT-like"/>
</dbReference>
<dbReference type="InterPro" id="IPR051813">
    <property type="entry name" value="HepT_RNase_toxin"/>
</dbReference>
<dbReference type="PANTHER" id="PTHR34139:SF1">
    <property type="entry name" value="RNASE MJ1380-RELATED"/>
    <property type="match status" value="1"/>
</dbReference>
<dbReference type="PANTHER" id="PTHR34139">
    <property type="entry name" value="UPF0331 PROTEIN MJ0127"/>
    <property type="match status" value="1"/>
</dbReference>
<dbReference type="Pfam" id="PF01934">
    <property type="entry name" value="HepT-like"/>
    <property type="match status" value="1"/>
</dbReference>